<comment type="similarity">
    <text evidence="1">Belongs to the UPF0213 family.</text>
</comment>
<organism>
    <name type="scientific">Escherichia coli (strain K12)</name>
    <dbReference type="NCBI Taxonomy" id="83333"/>
    <lineage>
        <taxon>Bacteria</taxon>
        <taxon>Pseudomonadati</taxon>
        <taxon>Pseudomonadota</taxon>
        <taxon>Gammaproteobacteria</taxon>
        <taxon>Enterobacterales</taxon>
        <taxon>Enterobacteriaceae</taxon>
        <taxon>Escherichia</taxon>
    </lineage>
</organism>
<sequence length="100" mass="11270">MTPWFLYLIRTADNKLYTGITTDVERRYQQHQSGKGAKALRGKGELTLVFSAPVGDRSLALRAEYRVKQLTKRQKERLVAEGAGFAELLSSLQTPEIKSD</sequence>
<reference key="1">
    <citation type="journal article" date="1997" name="Science">
        <title>The complete genome sequence of Escherichia coli K-12.</title>
        <authorList>
            <person name="Blattner F.R."/>
            <person name="Plunkett G. III"/>
            <person name="Bloch C.A."/>
            <person name="Perna N.T."/>
            <person name="Burland V."/>
            <person name="Riley M."/>
            <person name="Collado-Vides J."/>
            <person name="Glasner J.D."/>
            <person name="Rode C.K."/>
            <person name="Mayhew G.F."/>
            <person name="Gregor J."/>
            <person name="Davis N.W."/>
            <person name="Kirkpatrick H.A."/>
            <person name="Goeden M.A."/>
            <person name="Rose D.J."/>
            <person name="Mau B."/>
            <person name="Shao Y."/>
        </authorList>
    </citation>
    <scope>NUCLEOTIDE SEQUENCE [LARGE SCALE GENOMIC DNA]</scope>
    <source>
        <strain>K12 / MG1655 / ATCC 47076</strain>
    </source>
</reference>
<reference key="2">
    <citation type="journal article" date="2006" name="Mol. Syst. Biol.">
        <title>Highly accurate genome sequences of Escherichia coli K-12 strains MG1655 and W3110.</title>
        <authorList>
            <person name="Hayashi K."/>
            <person name="Morooka N."/>
            <person name="Yamamoto Y."/>
            <person name="Fujita K."/>
            <person name="Isono K."/>
            <person name="Choi S."/>
            <person name="Ohtsubo E."/>
            <person name="Baba T."/>
            <person name="Wanner B.L."/>
            <person name="Mori H."/>
            <person name="Horiuchi T."/>
        </authorList>
    </citation>
    <scope>NUCLEOTIDE SEQUENCE [LARGE SCALE GENOMIC DNA]</scope>
    <source>
        <strain>K12 / W3110 / ATCC 27325 / DSM 5911</strain>
    </source>
</reference>
<evidence type="ECO:0000255" key="1">
    <source>
        <dbReference type="HAMAP-Rule" id="MF_01029"/>
    </source>
</evidence>
<name>YHBQ_ECOLI</name>
<proteinExistence type="inferred from homology"/>
<accession>P45472</accession>
<accession>Q2M955</accession>
<dbReference type="EMBL" id="U18997">
    <property type="protein sequence ID" value="AAA57958.1"/>
    <property type="molecule type" value="Genomic_DNA"/>
</dbReference>
<dbReference type="EMBL" id="U00096">
    <property type="protein sequence ID" value="AAC76189.1"/>
    <property type="molecule type" value="Genomic_DNA"/>
</dbReference>
<dbReference type="EMBL" id="AP009048">
    <property type="protein sequence ID" value="BAE77201.1"/>
    <property type="molecule type" value="Genomic_DNA"/>
</dbReference>
<dbReference type="PIR" id="G65105">
    <property type="entry name" value="G65105"/>
</dbReference>
<dbReference type="RefSeq" id="NP_417624.1">
    <property type="nucleotide sequence ID" value="NC_000913.3"/>
</dbReference>
<dbReference type="RefSeq" id="WP_000189333.1">
    <property type="nucleotide sequence ID" value="NZ_LN832404.1"/>
</dbReference>
<dbReference type="SMR" id="P45472"/>
<dbReference type="BioGRID" id="4259272">
    <property type="interactions" value="99"/>
</dbReference>
<dbReference type="FunCoup" id="P45472">
    <property type="interactions" value="208"/>
</dbReference>
<dbReference type="IntAct" id="P45472">
    <property type="interactions" value="13"/>
</dbReference>
<dbReference type="STRING" id="511145.b3155"/>
<dbReference type="PaxDb" id="511145-b3155"/>
<dbReference type="DNASU" id="947671"/>
<dbReference type="EnsemblBacteria" id="AAC76189">
    <property type="protein sequence ID" value="AAC76189"/>
    <property type="gene ID" value="b3155"/>
</dbReference>
<dbReference type="GeneID" id="947671"/>
<dbReference type="KEGG" id="ecj:JW3124"/>
<dbReference type="KEGG" id="eco:b3155"/>
<dbReference type="KEGG" id="ecoc:C3026_17185"/>
<dbReference type="PATRIC" id="fig|511145.12.peg.3250"/>
<dbReference type="EchoBASE" id="EB2639"/>
<dbReference type="eggNOG" id="COG2827">
    <property type="taxonomic scope" value="Bacteria"/>
</dbReference>
<dbReference type="HOGENOM" id="CLU_135650_0_1_6"/>
<dbReference type="InParanoid" id="P45472"/>
<dbReference type="OMA" id="VYVEQWP"/>
<dbReference type="OrthoDB" id="9797095at2"/>
<dbReference type="PhylomeDB" id="P45472"/>
<dbReference type="BioCyc" id="EcoCyc:G7649-MONOMER"/>
<dbReference type="BioCyc" id="MetaCyc:G7649-MONOMER"/>
<dbReference type="PRO" id="PR:P45472"/>
<dbReference type="Proteomes" id="UP000000625">
    <property type="component" value="Chromosome"/>
</dbReference>
<dbReference type="GO" id="GO:0008296">
    <property type="term" value="F:3'-5'-DNA exonuclease activity"/>
    <property type="evidence" value="ECO:0000314"/>
    <property type="project" value="EcoCyc"/>
</dbReference>
<dbReference type="GO" id="GO:0004520">
    <property type="term" value="F:DNA endonuclease activity"/>
    <property type="evidence" value="ECO:0000314"/>
    <property type="project" value="EcoCyc"/>
</dbReference>
<dbReference type="GO" id="GO:0006974">
    <property type="term" value="P:DNA damage response"/>
    <property type="evidence" value="ECO:0000269"/>
    <property type="project" value="EcoCyc"/>
</dbReference>
<dbReference type="CDD" id="cd10456">
    <property type="entry name" value="GIY-YIG_UPF0213"/>
    <property type="match status" value="1"/>
</dbReference>
<dbReference type="FunFam" id="3.40.1440.10:FF:000002">
    <property type="entry name" value="UPF0213 protein YhbQ"/>
    <property type="match status" value="1"/>
</dbReference>
<dbReference type="Gene3D" id="3.40.1440.10">
    <property type="entry name" value="GIY-YIG endonuclease"/>
    <property type="match status" value="1"/>
</dbReference>
<dbReference type="HAMAP" id="MF_01029">
    <property type="entry name" value="UPF0213"/>
    <property type="match status" value="1"/>
</dbReference>
<dbReference type="InterPro" id="IPR000305">
    <property type="entry name" value="GIY-YIG_endonuc"/>
</dbReference>
<dbReference type="InterPro" id="IPR035901">
    <property type="entry name" value="GIY-YIG_endonuc_sf"/>
</dbReference>
<dbReference type="InterPro" id="IPR050190">
    <property type="entry name" value="UPF0213_domain"/>
</dbReference>
<dbReference type="InterPro" id="IPR022992">
    <property type="entry name" value="UPF0213_GIY-YIG_endonuc"/>
</dbReference>
<dbReference type="PANTHER" id="PTHR34477">
    <property type="entry name" value="UPF0213 PROTEIN YHBQ"/>
    <property type="match status" value="1"/>
</dbReference>
<dbReference type="PANTHER" id="PTHR34477:SF1">
    <property type="entry name" value="UPF0213 PROTEIN YHBQ"/>
    <property type="match status" value="1"/>
</dbReference>
<dbReference type="Pfam" id="PF01541">
    <property type="entry name" value="GIY-YIG"/>
    <property type="match status" value="1"/>
</dbReference>
<dbReference type="SMART" id="SM00465">
    <property type="entry name" value="GIYc"/>
    <property type="match status" value="1"/>
</dbReference>
<dbReference type="SUPFAM" id="SSF82771">
    <property type="entry name" value="GIY-YIG endonuclease"/>
    <property type="match status" value="1"/>
</dbReference>
<dbReference type="PROSITE" id="PS50164">
    <property type="entry name" value="GIY_YIG"/>
    <property type="match status" value="1"/>
</dbReference>
<gene>
    <name evidence="1" type="primary">yhbQ</name>
    <name type="ordered locus">b3155</name>
    <name type="ordered locus">JW3124</name>
</gene>
<keyword id="KW-1185">Reference proteome</keyword>
<protein>
    <recommendedName>
        <fullName evidence="1">UPF0213 protein YhbQ</fullName>
    </recommendedName>
</protein>
<feature type="chain" id="PRO_0000161358" description="UPF0213 protein YhbQ">
    <location>
        <begin position="1"/>
        <end position="100"/>
    </location>
</feature>
<feature type="domain" description="GIY-YIG" evidence="1">
    <location>
        <begin position="2"/>
        <end position="77"/>
    </location>
</feature>